<reference key="1">
    <citation type="journal article" date="2005" name="Nature">
        <title>The genome of the social amoeba Dictyostelium discoideum.</title>
        <authorList>
            <person name="Eichinger L."/>
            <person name="Pachebat J.A."/>
            <person name="Gloeckner G."/>
            <person name="Rajandream M.A."/>
            <person name="Sucgang R."/>
            <person name="Berriman M."/>
            <person name="Song J."/>
            <person name="Olsen R."/>
            <person name="Szafranski K."/>
            <person name="Xu Q."/>
            <person name="Tunggal B."/>
            <person name="Kummerfeld S."/>
            <person name="Madera M."/>
            <person name="Konfortov B.A."/>
            <person name="Rivero F."/>
            <person name="Bankier A.T."/>
            <person name="Lehmann R."/>
            <person name="Hamlin N."/>
            <person name="Davies R."/>
            <person name="Gaudet P."/>
            <person name="Fey P."/>
            <person name="Pilcher K."/>
            <person name="Chen G."/>
            <person name="Saunders D."/>
            <person name="Sodergren E.J."/>
            <person name="Davis P."/>
            <person name="Kerhornou A."/>
            <person name="Nie X."/>
            <person name="Hall N."/>
            <person name="Anjard C."/>
            <person name="Hemphill L."/>
            <person name="Bason N."/>
            <person name="Farbrother P."/>
            <person name="Desany B."/>
            <person name="Just E."/>
            <person name="Morio T."/>
            <person name="Rost R."/>
            <person name="Churcher C.M."/>
            <person name="Cooper J."/>
            <person name="Haydock S."/>
            <person name="van Driessche N."/>
            <person name="Cronin A."/>
            <person name="Goodhead I."/>
            <person name="Muzny D.M."/>
            <person name="Mourier T."/>
            <person name="Pain A."/>
            <person name="Lu M."/>
            <person name="Harper D."/>
            <person name="Lindsay R."/>
            <person name="Hauser H."/>
            <person name="James K.D."/>
            <person name="Quiles M."/>
            <person name="Madan Babu M."/>
            <person name="Saito T."/>
            <person name="Buchrieser C."/>
            <person name="Wardroper A."/>
            <person name="Felder M."/>
            <person name="Thangavelu M."/>
            <person name="Johnson D."/>
            <person name="Knights A."/>
            <person name="Loulseged H."/>
            <person name="Mungall K.L."/>
            <person name="Oliver K."/>
            <person name="Price C."/>
            <person name="Quail M.A."/>
            <person name="Urushihara H."/>
            <person name="Hernandez J."/>
            <person name="Rabbinowitsch E."/>
            <person name="Steffen D."/>
            <person name="Sanders M."/>
            <person name="Ma J."/>
            <person name="Kohara Y."/>
            <person name="Sharp S."/>
            <person name="Simmonds M.N."/>
            <person name="Spiegler S."/>
            <person name="Tivey A."/>
            <person name="Sugano S."/>
            <person name="White B."/>
            <person name="Walker D."/>
            <person name="Woodward J.R."/>
            <person name="Winckler T."/>
            <person name="Tanaka Y."/>
            <person name="Shaulsky G."/>
            <person name="Schleicher M."/>
            <person name="Weinstock G.M."/>
            <person name="Rosenthal A."/>
            <person name="Cox E.C."/>
            <person name="Chisholm R.L."/>
            <person name="Gibbs R.A."/>
            <person name="Loomis W.F."/>
            <person name="Platzer M."/>
            <person name="Kay R.R."/>
            <person name="Williams J.G."/>
            <person name="Dear P.H."/>
            <person name="Noegel A.A."/>
            <person name="Barrell B.G."/>
            <person name="Kuspa A."/>
        </authorList>
    </citation>
    <scope>NUCLEOTIDE SEQUENCE [LARGE SCALE GENOMIC DNA]</scope>
    <source>
        <strain>AX4</strain>
    </source>
</reference>
<proteinExistence type="inferred from homology"/>
<protein>
    <recommendedName>
        <fullName>Protein psiP</fullName>
    </recommendedName>
</protein>
<sequence length="756" mass="82455">MFIQRTFLKVLTLLSIVTVLVHGQTQPKDKITLKAVIYDQHKFYNPNFQPKNEGEFVLTKGIVKSDIDQEKRIPVLNSMDANDSINKKARISWPDGFKYFFVDNQAGDSKSAKSGKNLPIQRDIELNWNGEAYEYSNSNYFPINGQGFNDVSYPVPRGYVPISGESWTSMSTSTSLKGNNYNFCLKLNSKFTYNGNEVFKFTGDDDVWVYINNKLVVDIGGIHSQVSASVDVTKLGLTVGTIYNFDFFYCERKTSESNIKIQTTIETYCAYVDYCGVCEGDGSTCCNPATTCNDGKRCTNDFCPDPKSPLAGKDISKYCDHIPVKTCSSKDTLCKQYTCSDDLKGDMCVIKNTVTCPGNQTNCEASGYCDDKFGCINPSKCTDYIGQCFSGKCVNGECAKVTADDCEKIIGGVCRSDYVCEPGLGCKSSERCRQGSDICDLVTCDPKATDESKRCITTVLTDEECRCCEYDTLRFCEQAACSNKTGLCQPIPKNVDDGNLCTIDACNEDEKTITHVQVTCGGCETCSYATGKCEPDSSLCNDNNICTIDICVHEGILDGLPQGNCSNTPVDCGANDEDKCKTWSCDPTKGGCQSTPVVCEDKGKCLVGTCQPSTGQCEYSDRVCDNGGAFCVIGQCDQRLGCLVFDRVCSSDNSRCEEGVCVNGTESEEGHCKSVKYDPLPFNCNTGAVVSTAVIAGSTVAGAVALGIFLYGGKKGYDYWKDSRNISMGSSNSNPLYEEQQTGRGVNPMYDDPAAN</sequence>
<dbReference type="EMBL" id="AAFI02000035">
    <property type="protein sequence ID" value="EAL67312.1"/>
    <property type="molecule type" value="Genomic_DNA"/>
</dbReference>
<dbReference type="RefSeq" id="XP_641283.1">
    <property type="nucleotide sequence ID" value="XM_636191.1"/>
</dbReference>
<dbReference type="FunCoup" id="Q54VS2">
    <property type="interactions" value="12"/>
</dbReference>
<dbReference type="GlyCosmos" id="Q54VS2">
    <property type="glycosylation" value="5 sites, No reported glycans"/>
</dbReference>
<dbReference type="GlyGen" id="Q54VS2">
    <property type="glycosylation" value="5 sites"/>
</dbReference>
<dbReference type="PaxDb" id="44689-DDB0232405"/>
<dbReference type="EnsemblProtists" id="EAL67312">
    <property type="protein sequence ID" value="EAL67312"/>
    <property type="gene ID" value="DDB_G0280171"/>
</dbReference>
<dbReference type="GeneID" id="8622415"/>
<dbReference type="KEGG" id="ddi:DDB_G0280171"/>
<dbReference type="dictyBase" id="DDB_G0280171">
    <property type="gene designation" value="psiP"/>
</dbReference>
<dbReference type="VEuPathDB" id="AmoebaDB:DDB_G0280171"/>
<dbReference type="HOGENOM" id="CLU_024170_0_0_1"/>
<dbReference type="InParanoid" id="Q54VS2"/>
<dbReference type="OMA" id="DEICIHE"/>
<dbReference type="PhylomeDB" id="Q54VS2"/>
<dbReference type="PRO" id="PR:Q54VS2"/>
<dbReference type="Proteomes" id="UP000002195">
    <property type="component" value="Chromosome 3"/>
</dbReference>
<dbReference type="GO" id="GO:0005576">
    <property type="term" value="C:extracellular region"/>
    <property type="evidence" value="ECO:0000318"/>
    <property type="project" value="GO_Central"/>
</dbReference>
<dbReference type="GO" id="GO:0016020">
    <property type="term" value="C:membrane"/>
    <property type="evidence" value="ECO:0007669"/>
    <property type="project" value="UniProtKB-SubCell"/>
</dbReference>
<dbReference type="InterPro" id="IPR011874">
    <property type="entry name" value="Fibro_Slime"/>
</dbReference>
<dbReference type="InterPro" id="IPR037524">
    <property type="entry name" value="PA14/GLEYA"/>
</dbReference>
<dbReference type="InterPro" id="IPR011658">
    <property type="entry name" value="PA14_dom"/>
</dbReference>
<dbReference type="InterPro" id="IPR051154">
    <property type="entry name" value="Prespore-cell_inducing_factor"/>
</dbReference>
<dbReference type="NCBIfam" id="TIGR02148">
    <property type="entry name" value="Fibro_Slime"/>
    <property type="match status" value="1"/>
</dbReference>
<dbReference type="PANTHER" id="PTHR31137:SF29">
    <property type="entry name" value="PROTEIN PSIA-RELATED"/>
    <property type="match status" value="1"/>
</dbReference>
<dbReference type="PANTHER" id="PTHR31137">
    <property type="entry name" value="PROTEIN PSIB-RELATED-RELATED"/>
    <property type="match status" value="1"/>
</dbReference>
<dbReference type="Pfam" id="PF07691">
    <property type="entry name" value="PA14"/>
    <property type="match status" value="1"/>
</dbReference>
<dbReference type="SMART" id="SM00758">
    <property type="entry name" value="PA14"/>
    <property type="match status" value="1"/>
</dbReference>
<dbReference type="PROSITE" id="PS51820">
    <property type="entry name" value="PA14"/>
    <property type="match status" value="1"/>
</dbReference>
<accession>Q54VS2</accession>
<evidence type="ECO:0000255" key="1"/>
<evidence type="ECO:0000255" key="2">
    <source>
        <dbReference type="PROSITE-ProRule" id="PRU01164"/>
    </source>
</evidence>
<evidence type="ECO:0000256" key="3">
    <source>
        <dbReference type="SAM" id="MobiDB-lite"/>
    </source>
</evidence>
<evidence type="ECO:0000305" key="4"/>
<organism>
    <name type="scientific">Dictyostelium discoideum</name>
    <name type="common">Social amoeba</name>
    <dbReference type="NCBI Taxonomy" id="44689"/>
    <lineage>
        <taxon>Eukaryota</taxon>
        <taxon>Amoebozoa</taxon>
        <taxon>Evosea</taxon>
        <taxon>Eumycetozoa</taxon>
        <taxon>Dictyostelia</taxon>
        <taxon>Dictyosteliales</taxon>
        <taxon>Dictyosteliaceae</taxon>
        <taxon>Dictyostelium</taxon>
    </lineage>
</organism>
<feature type="signal peptide" evidence="1">
    <location>
        <begin position="1"/>
        <end position="23"/>
    </location>
</feature>
<feature type="chain" id="PRO_0000327551" description="Protein psiP">
    <location>
        <begin position="24"/>
        <end position="756"/>
    </location>
</feature>
<feature type="topological domain" description="Extracellular" evidence="1">
    <location>
        <begin position="24"/>
        <end position="692"/>
    </location>
</feature>
<feature type="transmembrane region" description="Helical" evidence="1">
    <location>
        <begin position="693"/>
        <end position="713"/>
    </location>
</feature>
<feature type="topological domain" description="Cytoplasmic" evidence="1">
    <location>
        <begin position="714"/>
        <end position="756"/>
    </location>
</feature>
<feature type="domain" description="PA14" evidence="2">
    <location>
        <begin position="126"/>
        <end position="281"/>
    </location>
</feature>
<feature type="region of interest" description="Disordered" evidence="3">
    <location>
        <begin position="730"/>
        <end position="756"/>
    </location>
</feature>
<feature type="compositionally biased region" description="Polar residues" evidence="3">
    <location>
        <begin position="730"/>
        <end position="744"/>
    </location>
</feature>
<feature type="glycosylation site" description="N-linked (GlcNAc...) asparagine" evidence="1">
    <location>
        <position position="82"/>
    </location>
</feature>
<feature type="glycosylation site" description="N-linked (GlcNAc...) asparagine" evidence="1">
    <location>
        <position position="359"/>
    </location>
</feature>
<feature type="glycosylation site" description="N-linked (GlcNAc...) asparagine" evidence="1">
    <location>
        <position position="483"/>
    </location>
</feature>
<feature type="glycosylation site" description="N-linked (GlcNAc...) asparagine" evidence="1">
    <location>
        <position position="564"/>
    </location>
</feature>
<feature type="glycosylation site" description="N-linked (GlcNAc...) asparagine" evidence="1">
    <location>
        <position position="663"/>
    </location>
</feature>
<gene>
    <name type="primary">psiP</name>
    <name type="ORF">DDB_G0280171</name>
</gene>
<name>PSIP_DICDI</name>
<comment type="subcellular location">
    <subcellularLocation>
        <location evidence="4">Membrane</location>
        <topology evidence="4">Single-pass type I membrane protein</topology>
    </subcellularLocation>
</comment>
<comment type="similarity">
    <text evidence="4">Belongs to the prespore-cell-inducing factor family.</text>
</comment>
<keyword id="KW-0325">Glycoprotein</keyword>
<keyword id="KW-0472">Membrane</keyword>
<keyword id="KW-1185">Reference proteome</keyword>
<keyword id="KW-0732">Signal</keyword>
<keyword id="KW-0812">Transmembrane</keyword>
<keyword id="KW-1133">Transmembrane helix</keyword>